<gene>
    <name type="primary">RPB1</name>
</gene>
<comment type="function">
    <text evidence="1">DNA-dependent RNA polymerase catalyzes the transcription of DNA into RNA using the four ribonucleoside triphosphates as substrates. Largest and catalytic component of RNA polymerase II which synthesizes mRNA precursors and many functional non-coding RNAs. Forms the polymerase active center together with the second largest subunit. Pol II is the central component of the basal RNA polymerase II transcription machinery. It is composed of mobile elements that move relative to each other. RPB1 is part of the core element with the central large cleft, the clamp element that moves to open and close the cleft and the jaws that are thought to grab the incoming DNA template. At the start of transcription, a single-stranded DNA template strand of the promoter is positioned within the central active site cleft of Pol II. A bridging helix emanates from RPB1 and crosses the cleft near the catalytic site and is thought to promote translocation of Pol II by acting as a ratchet that moves the RNA-DNA hybrid through the active site by switching from straight to bent conformations at each step of nucleotide addition. During transcription elongation, Pol II moves on the template as the transcript elongates. Elongation is influenced by the phosphorylation status of the C-terminal domain (CTD) of Pol II largest subunit (RPB1), which serves as a platform for assembly of factors that regulate transcription initiation, elongation, termination and mRNA processing (By similarity).</text>
</comment>
<comment type="catalytic activity">
    <reaction>
        <text>RNA(n) + a ribonucleoside 5'-triphosphate = RNA(n+1) + diphosphate</text>
        <dbReference type="Rhea" id="RHEA:21248"/>
        <dbReference type="Rhea" id="RHEA-COMP:14527"/>
        <dbReference type="Rhea" id="RHEA-COMP:17342"/>
        <dbReference type="ChEBI" id="CHEBI:33019"/>
        <dbReference type="ChEBI" id="CHEBI:61557"/>
        <dbReference type="ChEBI" id="CHEBI:140395"/>
        <dbReference type="EC" id="2.7.7.6"/>
    </reaction>
</comment>
<comment type="subunit">
    <text evidence="1">Component of the RNA polymerase II (Pol II) complex consisting of 12 subunits.</text>
</comment>
<comment type="subcellular location">
    <subcellularLocation>
        <location evidence="2">Nucleus</location>
    </subcellularLocation>
</comment>
<comment type="PTM">
    <text>Phosphorylation activates POL II.</text>
</comment>
<comment type="miscellaneous">
    <text>The binding of ribonucleoside triphosphate to the RNA polymerase II transcribing complex probably involves a two-step mechanism. The initial binding seems to occur at the entry (E) site and involves a magnesium ion temporarily coordinated by three conserved aspartate residues of the two largest RNA Pol II subunits. The ribonucleoside triphosphate is transferred by a rotation to the nucleotide addition (A) site for pairing with the template DNA. The catalytic A site involves three conserved aspartate residues of the RNA Pol II largest subunit which permanently coordinate a second magnesium ion.</text>
</comment>
<comment type="similarity">
    <text evidence="3">Belongs to the RNA polymerase beta' chain family.</text>
</comment>
<protein>
    <recommendedName>
        <fullName>DNA-directed RNA polymerase II subunit RPB1</fullName>
        <shortName>RNA polymerase II subunit B1</shortName>
        <ecNumber>2.7.7.6</ecNumber>
    </recommendedName>
    <alternativeName>
        <fullName>DNA-directed RNA polymerase III largest subunit</fullName>
    </alternativeName>
</protein>
<name>RPB1_EUPOC</name>
<feature type="chain" id="PRO_0000073939" description="DNA-directed RNA polymerase II subunit RPB1">
    <location>
        <begin position="1"/>
        <end position="478" status="greater than"/>
    </location>
</feature>
<feature type="binding site" evidence="2">
    <location>
        <position position="68"/>
    </location>
    <ligand>
        <name>Zn(2+)</name>
        <dbReference type="ChEBI" id="CHEBI:29105"/>
        <label>1</label>
    </ligand>
</feature>
<feature type="binding site" evidence="2">
    <location>
        <position position="71"/>
    </location>
    <ligand>
        <name>Zn(2+)</name>
        <dbReference type="ChEBI" id="CHEBI:29105"/>
        <label>1</label>
    </ligand>
</feature>
<feature type="binding site" evidence="2">
    <location>
        <position position="78"/>
    </location>
    <ligand>
        <name>Zn(2+)</name>
        <dbReference type="ChEBI" id="CHEBI:29105"/>
        <label>1</label>
    </ligand>
</feature>
<feature type="binding site" evidence="2">
    <location>
        <position position="81"/>
    </location>
    <ligand>
        <name>Zn(2+)</name>
        <dbReference type="ChEBI" id="CHEBI:29105"/>
        <label>1</label>
    </ligand>
</feature>
<feature type="binding site" evidence="2">
    <location>
        <position position="108"/>
    </location>
    <ligand>
        <name>Zn(2+)</name>
        <dbReference type="ChEBI" id="CHEBI:29105"/>
        <label>2</label>
    </ligand>
</feature>
<feature type="binding site" evidence="2">
    <location>
        <position position="111"/>
    </location>
    <ligand>
        <name>Zn(2+)</name>
        <dbReference type="ChEBI" id="CHEBI:29105"/>
        <label>2</label>
    </ligand>
</feature>
<feature type="binding site" evidence="2">
    <location>
        <position position="149"/>
    </location>
    <ligand>
        <name>Zn(2+)</name>
        <dbReference type="ChEBI" id="CHEBI:29105"/>
        <label>2</label>
    </ligand>
</feature>
<feature type="binding site" evidence="2">
    <location>
        <position position="474"/>
    </location>
    <ligand>
        <name>Mg(2+)</name>
        <dbReference type="ChEBI" id="CHEBI:18420"/>
        <label>1</label>
        <note>catalytic</note>
    </ligand>
</feature>
<feature type="binding site" evidence="2">
    <location>
        <position position="474"/>
    </location>
    <ligand>
        <name>Mg(2+)</name>
        <dbReference type="ChEBI" id="CHEBI:18420"/>
        <label>2</label>
        <note>ligand shared with RPB2</note>
    </ligand>
</feature>
<feature type="binding site" evidence="2">
    <location>
        <position position="476"/>
    </location>
    <ligand>
        <name>Mg(2+)</name>
        <dbReference type="ChEBI" id="CHEBI:18420"/>
        <label>1</label>
        <note>catalytic</note>
    </ligand>
</feature>
<feature type="binding site" evidence="2">
    <location>
        <position position="476"/>
    </location>
    <ligand>
        <name>Mg(2+)</name>
        <dbReference type="ChEBI" id="CHEBI:18420"/>
        <label>2</label>
        <note>ligand shared with RPB2</note>
    </ligand>
</feature>
<feature type="non-terminal residue">
    <location>
        <position position="478"/>
    </location>
</feature>
<dbReference type="EC" id="2.7.7.6"/>
<dbReference type="EMBL" id="X66452">
    <property type="protein sequence ID" value="CAA47068.1"/>
    <property type="molecule type" value="Genomic_DNA"/>
</dbReference>
<dbReference type="PIR" id="S33886">
    <property type="entry name" value="S33886"/>
</dbReference>
<dbReference type="SMR" id="P28364"/>
<dbReference type="GO" id="GO:0005739">
    <property type="term" value="C:mitochondrion"/>
    <property type="evidence" value="ECO:0007669"/>
    <property type="project" value="GOC"/>
</dbReference>
<dbReference type="GO" id="GO:0009536">
    <property type="term" value="C:plastid"/>
    <property type="evidence" value="ECO:0007669"/>
    <property type="project" value="GOC"/>
</dbReference>
<dbReference type="GO" id="GO:0005665">
    <property type="term" value="C:RNA polymerase II, core complex"/>
    <property type="evidence" value="ECO:0007669"/>
    <property type="project" value="TreeGrafter"/>
</dbReference>
<dbReference type="GO" id="GO:0003677">
    <property type="term" value="F:DNA binding"/>
    <property type="evidence" value="ECO:0007669"/>
    <property type="project" value="UniProtKB-KW"/>
</dbReference>
<dbReference type="GO" id="GO:0003899">
    <property type="term" value="F:DNA-directed RNA polymerase activity"/>
    <property type="evidence" value="ECO:0007669"/>
    <property type="project" value="UniProtKB-EC"/>
</dbReference>
<dbReference type="GO" id="GO:0046872">
    <property type="term" value="F:metal ion binding"/>
    <property type="evidence" value="ECO:0007669"/>
    <property type="project" value="UniProtKB-KW"/>
</dbReference>
<dbReference type="GO" id="GO:0006351">
    <property type="term" value="P:DNA-templated transcription"/>
    <property type="evidence" value="ECO:0007669"/>
    <property type="project" value="InterPro"/>
</dbReference>
<dbReference type="FunFam" id="4.10.860.120:FF:000003">
    <property type="entry name" value="DNA-directed RNA polymerase subunit"/>
    <property type="match status" value="1"/>
</dbReference>
<dbReference type="Gene3D" id="2.40.40.20">
    <property type="match status" value="1"/>
</dbReference>
<dbReference type="Gene3D" id="3.30.1490.180">
    <property type="entry name" value="RNA polymerase ii"/>
    <property type="match status" value="1"/>
</dbReference>
<dbReference type="Gene3D" id="4.10.860.120">
    <property type="entry name" value="RNA polymerase II, clamp domain"/>
    <property type="match status" value="1"/>
</dbReference>
<dbReference type="InterPro" id="IPR045867">
    <property type="entry name" value="DNA-dir_RpoC_beta_prime"/>
</dbReference>
<dbReference type="InterPro" id="IPR000722">
    <property type="entry name" value="RNA_pol_asu"/>
</dbReference>
<dbReference type="InterPro" id="IPR006592">
    <property type="entry name" value="RNA_pol_N"/>
</dbReference>
<dbReference type="InterPro" id="IPR007080">
    <property type="entry name" value="RNA_pol_Rpb1_1"/>
</dbReference>
<dbReference type="InterPro" id="IPR044893">
    <property type="entry name" value="RNA_pol_Rpb1_clamp_domain"/>
</dbReference>
<dbReference type="PANTHER" id="PTHR19376">
    <property type="entry name" value="DNA-DIRECTED RNA POLYMERASE"/>
    <property type="match status" value="1"/>
</dbReference>
<dbReference type="PANTHER" id="PTHR19376:SF37">
    <property type="entry name" value="DNA-DIRECTED RNA POLYMERASE II SUBUNIT RPB1"/>
    <property type="match status" value="1"/>
</dbReference>
<dbReference type="Pfam" id="PF04997">
    <property type="entry name" value="RNA_pol_Rpb1_1"/>
    <property type="match status" value="1"/>
</dbReference>
<dbReference type="Pfam" id="PF00623">
    <property type="entry name" value="RNA_pol_Rpb1_2"/>
    <property type="match status" value="1"/>
</dbReference>
<dbReference type="SMART" id="SM00663">
    <property type="entry name" value="RPOLA_N"/>
    <property type="match status" value="1"/>
</dbReference>
<dbReference type="SUPFAM" id="SSF64484">
    <property type="entry name" value="beta and beta-prime subunits of DNA dependent RNA-polymerase"/>
    <property type="match status" value="1"/>
</dbReference>
<proteinExistence type="inferred from homology"/>
<reference key="1">
    <citation type="journal article" date="1992" name="Nucleic Acids Res.">
        <title>Gene dosage as a possible major determinant for equal expression levels of genes encoding RNA polymerase subunits in the hypotrichous ciliate Euplotes octocarinatus.</title>
        <authorList>
            <person name="Kaufmann J."/>
            <person name="Klein A."/>
        </authorList>
    </citation>
    <scope>NUCLEOTIDE SEQUENCE [GENOMIC DNA]</scope>
    <source>
        <strain>(68)-VIII</strain>
    </source>
</reference>
<reference key="2">
    <citation type="journal article" date="1992" name="Nucleic Acids Res.">
        <title>TGA cysteine codons and intron sequences in conserved and nonconserved positions are found in macronuclear RNA polymerase genes of Euplotes octocarinatus.</title>
        <authorList>
            <person name="Kaufmann J."/>
            <person name="Florian V."/>
            <person name="Klein A."/>
        </authorList>
    </citation>
    <scope>NUCLEOTIDE SEQUENCE [GENOMIC DNA] OF 1-124</scope>
</reference>
<keyword id="KW-0238">DNA-binding</keyword>
<keyword id="KW-0240">DNA-directed RNA polymerase</keyword>
<keyword id="KW-0460">Magnesium</keyword>
<keyword id="KW-0479">Metal-binding</keyword>
<keyword id="KW-0548">Nucleotidyltransferase</keyword>
<keyword id="KW-0539">Nucleus</keyword>
<keyword id="KW-0677">Repeat</keyword>
<keyword id="KW-0804">Transcription</keyword>
<keyword id="KW-0808">Transferase</keyword>
<keyword id="KW-0862">Zinc</keyword>
<sequence>MSRGTIYTESTMDFQKVRKIQFGLLDPKEIQAMSVVQVENEKIYDNGIPTDGGINDLRMGTMEKAMRCSTCQGDSKECPGHFGHIELAQPVFHIGFIDLVKKILKCVCFNCNKLLITDKHDKYSALKRVKDPKLKLNKVYKVCKDIKVCGKADRKSETYTEGSGQKQPRLRKTGLKIKAEFPIDEDDPSTNDNKRDLSASECLKILGRISPDDCKFLGFDMVLARPEWLIISRLPVAPPPVRPSVCMGSNIRQEDDLTHQYQQILKANNQLRKHLSTANHIINENYQLLQFYCATLIDNEQAGQMVSRHKSGGKAIKAIRARLKGKEGRLRGNLMGKRVDFSARTVITCDPTLDLDQLGVPRSIAENITIPEVVTPQNIDEMRKLVINGPNKWPGAKYIKGEGGKMIDLSYAKTTETFIDYGYVIERHLKNDDFVLFNRQPSLHKMSIMGHRVKVLPYSTFRLNLSVTAPYNADFDGS</sequence>
<evidence type="ECO:0000250" key="1"/>
<evidence type="ECO:0000250" key="2">
    <source>
        <dbReference type="UniProtKB" id="P04050"/>
    </source>
</evidence>
<evidence type="ECO:0000305" key="3"/>
<accession>P28364</accession>
<organism>
    <name type="scientific">Euplotoides octocarinatus</name>
    <name type="common">Freshwater ciliate</name>
    <name type="synonym">Euplotes octocarinatus</name>
    <dbReference type="NCBI Taxonomy" id="2716877"/>
    <lineage>
        <taxon>Eukaryota</taxon>
        <taxon>Sar</taxon>
        <taxon>Alveolata</taxon>
        <taxon>Ciliophora</taxon>
        <taxon>Intramacronucleata</taxon>
        <taxon>Spirotrichea</taxon>
        <taxon>Hypotrichia</taxon>
        <taxon>Euplotida</taxon>
        <taxon>Euplotidae</taxon>
        <taxon>Euplotes</taxon>
    </lineage>
</organism>